<accession>A5FVT7</accession>
<keyword id="KW-0210">Decarboxylase</keyword>
<keyword id="KW-0456">Lyase</keyword>
<keyword id="KW-1185">Reference proteome</keyword>
<keyword id="KW-0704">Schiff base</keyword>
<evidence type="ECO:0000255" key="1">
    <source>
        <dbReference type="HAMAP-Rule" id="MF_00597"/>
    </source>
</evidence>
<feature type="chain" id="PRO_1000025629" description="Acetoacetate decarboxylase">
    <location>
        <begin position="1"/>
        <end position="245"/>
    </location>
</feature>
<feature type="active site" description="Schiff-base intermediate with acetoacetate" evidence="1">
    <location>
        <position position="116"/>
    </location>
</feature>
<proteinExistence type="inferred from homology"/>
<name>ADC_ACICJ</name>
<dbReference type="EC" id="4.1.1.4" evidence="1"/>
<dbReference type="EMBL" id="CP000697">
    <property type="protein sequence ID" value="ABQ29719.1"/>
    <property type="molecule type" value="Genomic_DNA"/>
</dbReference>
<dbReference type="RefSeq" id="WP_007422113.1">
    <property type="nucleotide sequence ID" value="NC_009484.1"/>
</dbReference>
<dbReference type="SMR" id="A5FVT7"/>
<dbReference type="STRING" id="349163.Acry_0495"/>
<dbReference type="KEGG" id="acr:Acry_0495"/>
<dbReference type="eggNOG" id="COG4689">
    <property type="taxonomic scope" value="Bacteria"/>
</dbReference>
<dbReference type="HOGENOM" id="CLU_077089_0_0_5"/>
<dbReference type="Proteomes" id="UP000000245">
    <property type="component" value="Chromosome"/>
</dbReference>
<dbReference type="GO" id="GO:0047602">
    <property type="term" value="F:acetoacetate decarboxylase activity"/>
    <property type="evidence" value="ECO:0007669"/>
    <property type="project" value="UniProtKB-UniRule"/>
</dbReference>
<dbReference type="Gene3D" id="2.40.400.10">
    <property type="entry name" value="Acetoacetate decarboxylase-like"/>
    <property type="match status" value="1"/>
</dbReference>
<dbReference type="HAMAP" id="MF_00597">
    <property type="entry name" value="ADC"/>
    <property type="match status" value="1"/>
</dbReference>
<dbReference type="InterPro" id="IPR010451">
    <property type="entry name" value="Acetoacetate_decarboxylase"/>
</dbReference>
<dbReference type="InterPro" id="IPR023653">
    <property type="entry name" value="Acetoacetate_decarboxylase_bac"/>
</dbReference>
<dbReference type="InterPro" id="IPR023375">
    <property type="entry name" value="ADC_dom_sf"/>
</dbReference>
<dbReference type="NCBIfam" id="NF002614">
    <property type="entry name" value="PRK02265.1"/>
    <property type="match status" value="1"/>
</dbReference>
<dbReference type="Pfam" id="PF06314">
    <property type="entry name" value="ADC"/>
    <property type="match status" value="1"/>
</dbReference>
<dbReference type="SUPFAM" id="SSF160104">
    <property type="entry name" value="Acetoacetate decarboxylase-like"/>
    <property type="match status" value="1"/>
</dbReference>
<organism>
    <name type="scientific">Acidiphilium cryptum (strain JF-5)</name>
    <dbReference type="NCBI Taxonomy" id="349163"/>
    <lineage>
        <taxon>Bacteria</taxon>
        <taxon>Pseudomonadati</taxon>
        <taxon>Pseudomonadota</taxon>
        <taxon>Alphaproteobacteria</taxon>
        <taxon>Acetobacterales</taxon>
        <taxon>Acidocellaceae</taxon>
        <taxon>Acidiphilium</taxon>
    </lineage>
</organism>
<reference key="1">
    <citation type="submission" date="2007-05" db="EMBL/GenBank/DDBJ databases">
        <title>Complete sequence of chromosome of Acidiphilium cryptum JF-5.</title>
        <authorList>
            <consortium name="US DOE Joint Genome Institute"/>
            <person name="Copeland A."/>
            <person name="Lucas S."/>
            <person name="Lapidus A."/>
            <person name="Barry K."/>
            <person name="Detter J.C."/>
            <person name="Glavina del Rio T."/>
            <person name="Hammon N."/>
            <person name="Israni S."/>
            <person name="Dalin E."/>
            <person name="Tice H."/>
            <person name="Pitluck S."/>
            <person name="Sims D."/>
            <person name="Brettin T."/>
            <person name="Bruce D."/>
            <person name="Han C."/>
            <person name="Schmutz J."/>
            <person name="Larimer F."/>
            <person name="Land M."/>
            <person name="Hauser L."/>
            <person name="Kyrpides N."/>
            <person name="Kim E."/>
            <person name="Magnuson T."/>
            <person name="Richardson P."/>
        </authorList>
    </citation>
    <scope>NUCLEOTIDE SEQUENCE [LARGE SCALE GENOMIC DNA]</scope>
    <source>
        <strain>JF-5</strain>
    </source>
</reference>
<gene>
    <name evidence="1" type="primary">adc</name>
    <name type="ordered locus">Acry_0495</name>
</gene>
<comment type="function">
    <text evidence="1">Catalyzes the conversion of acetoacetate to acetone and carbon dioxide.</text>
</comment>
<comment type="catalytic activity">
    <reaction evidence="1">
        <text>acetoacetate + H(+) = acetone + CO2</text>
        <dbReference type="Rhea" id="RHEA:19729"/>
        <dbReference type="ChEBI" id="CHEBI:13705"/>
        <dbReference type="ChEBI" id="CHEBI:15347"/>
        <dbReference type="ChEBI" id="CHEBI:15378"/>
        <dbReference type="ChEBI" id="CHEBI:16526"/>
        <dbReference type="EC" id="4.1.1.4"/>
    </reaction>
</comment>
<comment type="similarity">
    <text evidence="1">Belongs to the ADC family.</text>
</comment>
<protein>
    <recommendedName>
        <fullName evidence="1">Acetoacetate decarboxylase</fullName>
        <shortName evidence="1">AAD</shortName>
        <shortName evidence="1">ADC</shortName>
        <ecNumber evidence="1">4.1.1.4</ecNumber>
    </recommendedName>
</protein>
<sequence length="245" mass="27261">MDAATIRETAFAMPLTSPGFPKGPYRFVNREYMIITYRTDRAALEKIVPEPLELADDVVKYEFIRMPDSTGFGDYTESGQVIPVRYKGKPGVYVHSMFLNDHPPIAGGREIWGFPKKLARPVLEVEIDTLVGTLDYGRIRVATGTMGYKHHTLDHDPVLSSMHEPNFLLKIIPHVDGSPRICELVRYHMSDIVLKGAWTGPAALALYPHALAPVADLPVREVVAASHILADMTLDLGEVVHDYLA</sequence>